<protein>
    <recommendedName>
        <fullName>FH1/FH2 domain-containing protein 3</fullName>
    </recommendedName>
    <alternativeName>
        <fullName>Formin homolog overexpressed in spleen 2</fullName>
        <shortName>mFHOS2</shortName>
    </alternativeName>
</protein>
<accession>Q76LL6</accession>
<accession>B2RQR3</accession>
<accession>Q5DTV7</accession>
<accession>Q76HP7</accession>
<accession>Q76LL5</accession>
<keyword id="KW-0009">Actin-binding</keyword>
<keyword id="KW-0025">Alternative splicing</keyword>
<keyword id="KW-0175">Coiled coil</keyword>
<keyword id="KW-0963">Cytoplasm</keyword>
<keyword id="KW-0206">Cytoskeleton</keyword>
<keyword id="KW-0597">Phosphoprotein</keyword>
<keyword id="KW-1185">Reference proteome</keyword>
<feature type="chain" id="PRO_0000283792" description="FH1/FH2 domain-containing protein 3">
    <location>
        <begin position="1"/>
        <end position="1578"/>
    </location>
</feature>
<feature type="domain" description="GBD/FH3" evidence="4">
    <location>
        <begin position="18"/>
        <end position="405"/>
    </location>
</feature>
<feature type="domain" description="FH1">
    <location>
        <begin position="985"/>
        <end position="1016"/>
    </location>
</feature>
<feature type="domain" description="FH2" evidence="5">
    <location>
        <begin position="1039"/>
        <end position="1435"/>
    </location>
</feature>
<feature type="domain" description="DAD" evidence="3">
    <location>
        <begin position="1515"/>
        <end position="1547"/>
    </location>
</feature>
<feature type="region of interest" description="Disordered" evidence="6">
    <location>
        <begin position="324"/>
        <end position="518"/>
    </location>
</feature>
<feature type="region of interest" description="Disordered" evidence="6">
    <location>
        <begin position="535"/>
        <end position="824"/>
    </location>
</feature>
<feature type="region of interest" description="Disordered" evidence="6">
    <location>
        <begin position="915"/>
        <end position="942"/>
    </location>
</feature>
<feature type="region of interest" description="Disordered" evidence="6">
    <location>
        <begin position="979"/>
        <end position="1013"/>
    </location>
</feature>
<feature type="region of interest" description="Disordered" evidence="6">
    <location>
        <begin position="1418"/>
        <end position="1462"/>
    </location>
</feature>
<feature type="region of interest" description="Disordered" evidence="6">
    <location>
        <begin position="1490"/>
        <end position="1514"/>
    </location>
</feature>
<feature type="region of interest" description="Disordered" evidence="6">
    <location>
        <begin position="1528"/>
        <end position="1565"/>
    </location>
</feature>
<feature type="coiled-coil region" evidence="2">
    <location>
        <begin position="597"/>
        <end position="645"/>
    </location>
</feature>
<feature type="compositionally biased region" description="Polar residues" evidence="6">
    <location>
        <begin position="368"/>
        <end position="383"/>
    </location>
</feature>
<feature type="compositionally biased region" description="Acidic residues" evidence="6">
    <location>
        <begin position="399"/>
        <end position="425"/>
    </location>
</feature>
<feature type="compositionally biased region" description="Low complexity" evidence="6">
    <location>
        <begin position="434"/>
        <end position="446"/>
    </location>
</feature>
<feature type="compositionally biased region" description="Polar residues" evidence="6">
    <location>
        <begin position="453"/>
        <end position="473"/>
    </location>
</feature>
<feature type="compositionally biased region" description="Low complexity" evidence="6">
    <location>
        <begin position="553"/>
        <end position="583"/>
    </location>
</feature>
<feature type="compositionally biased region" description="Polar residues" evidence="6">
    <location>
        <begin position="584"/>
        <end position="598"/>
    </location>
</feature>
<feature type="compositionally biased region" description="Basic and acidic residues" evidence="6">
    <location>
        <begin position="599"/>
        <end position="651"/>
    </location>
</feature>
<feature type="compositionally biased region" description="Low complexity" evidence="6">
    <location>
        <begin position="675"/>
        <end position="684"/>
    </location>
</feature>
<feature type="compositionally biased region" description="Low complexity" evidence="6">
    <location>
        <begin position="692"/>
        <end position="701"/>
    </location>
</feature>
<feature type="compositionally biased region" description="Acidic residues" evidence="6">
    <location>
        <begin position="751"/>
        <end position="761"/>
    </location>
</feature>
<feature type="compositionally biased region" description="Basic and acidic residues" evidence="6">
    <location>
        <begin position="762"/>
        <end position="782"/>
    </location>
</feature>
<feature type="compositionally biased region" description="Low complexity" evidence="6">
    <location>
        <begin position="784"/>
        <end position="793"/>
    </location>
</feature>
<feature type="compositionally biased region" description="Basic and acidic residues" evidence="6">
    <location>
        <begin position="795"/>
        <end position="809"/>
    </location>
</feature>
<feature type="compositionally biased region" description="Pro residues" evidence="6">
    <location>
        <begin position="985"/>
        <end position="1013"/>
    </location>
</feature>
<feature type="compositionally biased region" description="Basic residues" evidence="6">
    <location>
        <begin position="1420"/>
        <end position="1434"/>
    </location>
</feature>
<feature type="compositionally biased region" description="Low complexity" evidence="6">
    <location>
        <begin position="1444"/>
        <end position="1456"/>
    </location>
</feature>
<feature type="compositionally biased region" description="Basic residues" evidence="6">
    <location>
        <begin position="1541"/>
        <end position="1556"/>
    </location>
</feature>
<feature type="modified residue" description="Phosphoserine" evidence="13">
    <location>
        <position position="345"/>
    </location>
</feature>
<feature type="modified residue" description="Phosphoserine" evidence="13">
    <location>
        <position position="376"/>
    </location>
</feature>
<feature type="modified residue" description="Phosphothreonine" evidence="13">
    <location>
        <position position="413"/>
    </location>
</feature>
<feature type="modified residue" description="Phosphoserine" evidence="13">
    <location>
        <position position="921"/>
    </location>
</feature>
<feature type="modified residue" description="Phosphothreonine" evidence="13">
    <location>
        <position position="933"/>
    </location>
</feature>
<feature type="splice variant" id="VSP_024399" description="In isoform 4." evidence="10">
    <original>KDEEEEEEEEQPITEPNSEEEREDDAQCQGKDS</original>
    <variation>N</variation>
    <location>
        <begin position="400"/>
        <end position="432"/>
    </location>
</feature>
<feature type="splice variant" id="VSP_024400" description="In isoform 2 and isoform 3." evidence="9 10 11">
    <location>
        <begin position="401"/>
        <end position="551"/>
    </location>
</feature>
<feature type="splice variant" id="VSP_024401" description="In isoform 3." evidence="11">
    <location>
        <begin position="992"/>
        <end position="1005"/>
    </location>
</feature>
<feature type="sequence conflict" description="In Ref. 3; BAD90459." evidence="12" ref="3">
    <original>Y</original>
    <variation>S</variation>
    <location>
        <position position="575"/>
    </location>
</feature>
<feature type="sequence conflict" description="In Ref. 3; BAD90459." evidence="12" ref="3">
    <original>S</original>
    <variation>P</variation>
    <location>
        <position position="690"/>
    </location>
</feature>
<feature type="sequence conflict" description="In Ref. 3; BAD90459." evidence="12" ref="3">
    <original>G</original>
    <variation>S</variation>
    <location>
        <position position="856"/>
    </location>
</feature>
<sequence length="1578" mass="175655">MATLACRVQFLDDTDPFNSTNFPEPSRPPLFTFREDLALGTQLAGVHRLLRAPHKLDDCTLQLSHNGAYLDLEATLAEQRDELEGFQDDTGRGKKNSIILRTQLSVRVHACIEKLYNSSGRDLRRALFSLKQIFQDDKDLVHEFVIAEGLTCLIKVGAEADQNYQNYILRALGQIMLYVDGMNGVINHSETIQWLYTLVGSKFRLVVKTALKLLLVFVEYSESNAPLLIQAVSAVDTKRGVKPWSNIMEILEEKDGVDTELLVYAMTLVNKTLAGLPDQDTFYDVVDCLEELGIAAVSQRHLNKKGTDLDLLEQFNIYEVALRHEDGDETAEPPPSGHRDRRRASMCSGGTVGEQQGLDRRRSRRHSIQNIKSPLSAPTSPCSPSVPAFKPSQVRDLCEKDEEEEEEEEQPITEPNSEEEREDDAQCQGKDSKASSASGQSSPGKDAAPESSALHTTSSPTSQGRWLSASTAARSPVLGGTSGPEASRPAARLLPPSPGLATRPSTAPKVSPTIDKLPYVPHSPFHLFSYDFEDSPLLTKDKGGDSQTENRYSNFSSNSFQSSRPSPGPSGSPSYASSFSSPQDTRSSPSGLLTSSFRQHQESLAAERERRRQEREERLQRIEREERNKFNREYLDKREEQRQARGERYKYLEQLAAETQEKEPRSQSVSRGRADLSLDLSLPAAPAPPSPSSQSPSADSQEALPVPSSPPTLQCPQVSGKDHEPELEAEAGQGADEASQDIASAHRGAESQEEPVLELEPEERASLSEKERQNEEVNERDNCSASSISSSSSTLEREEKEDKLSEDRATGLWSTSLQDVGVNGQCGDILTSKRFMLDMLYAHNRKSTEDEEKDDGEPGRSAQEVEAVASLATRISTLQANSQAPEESIKRVDIGCLDNRGSVKAFAEKFNSGEVGRGAISPDVESQDKVPDTPPAQLKTESDYIWDQLMANPRELRIQDMDFTDLGEEDDIDVLDVDLGHREAPGPPPPPPPTFLGLPPPPPPPLLDSVPPPPVPGNLLASPVFNTPQGLGWSQVPRGQPAFTKKKKTIRLFWNEVRPFEWPSKNNRRCREFLWSKLEPIKVDTSRLEHLFESKSKELSVTKKTAADGKRQEIIVLDSKRSNAINIGLTVLPPPRTIKIAILNFDEYALNKEGIEKILTMIPTEEEKQKIQEAQLANPEVPLGSAEQFLLTLSSISELSARLHLWAFKMDYETTEKEVAEPLLDLKEGIDQLENNKTLGFILSTLLAIGNFLNGTNAKAFELSYLEKVPEVKDTVHKQSLLHHVCTMVVENFPDSSDLYSEIGAITRSAKVDFDQLQDNLCQMERRCKASWDHLKAIAKHEMKPVLKQRMSEFLKDCAERIIILKIVHRRIINRFHSFLLFMGHPPYAIREVNINKFCRIISEFALEYRTTRERVLQQKQKRANHRERNKTRGKMITDSGKFSGSSPAAPSQPQGLSYAEDAAEHENMKAVLKTSSPALEDATPVLGVRTRSRASRGSTSSWTMGTEESPSVTDDAADEIMDRIVKSATQVPSQRVVPRERKRSRANRKSLRRTLKSGLTPEEARALGLVGTSELQL</sequence>
<comment type="function">
    <text evidence="1 7">May play a role in actin filament polymerization in cardiomyocytes (By similarity). Actin-organizing protein that may cause stress fiber formation together with cell elongation.</text>
</comment>
<comment type="subunit">
    <text evidence="1">Interacts with nestin/NES-based interfilament (IF). Interacts with SQSTM1.</text>
</comment>
<comment type="subcellular location">
    <subcellularLocation>
        <location evidence="8">Cytoplasm</location>
        <location evidence="8">Cytoskeleton</location>
    </subcellularLocation>
    <subcellularLocation>
        <location evidence="8">Cytoplasm</location>
        <location evidence="8">Myofibril</location>
        <location evidence="8">Sarcomere</location>
        <location evidence="8">Z line</location>
    </subcellularLocation>
    <text evidence="1">Main part of the protein localizes to actin fibers and the remaining part displays filamentous staining.</text>
</comment>
<comment type="alternative products">
    <event type="alternative splicing"/>
    <isoform>
        <id>Q76LL6-1</id>
        <name>1</name>
        <name>FHOS2L</name>
        <sequence type="displayed"/>
    </isoform>
    <isoform>
        <id>Q76LL6-2</id>
        <name>2</name>
        <name>FHOS2S</name>
        <sequence type="described" ref="VSP_024400"/>
    </isoform>
    <isoform>
        <id>Q76LL6-3</id>
        <name>3</name>
        <sequence type="described" ref="VSP_024400 VSP_024401"/>
    </isoform>
    <isoform>
        <id>Q76LL6-4</id>
        <name>4</name>
        <name>FHOS2M</name>
        <sequence type="described" ref="VSP_024399"/>
    </isoform>
    <text>Named isoforms=3.</text>
</comment>
<comment type="tissue specificity">
    <text evidence="7 8">Expressed in the heart, including left ventricle, kidney, brain and skeletal muscle, including soleus and tibialis anterior (at protein level).</text>
</comment>
<comment type="domain">
    <text evidence="1">The DAD domain regulates activation via by an autoinhibitory interaction with the GBD/FH3 domain. This autoinhibition is released upon competitive binding of an activated GTPase. The release of DAD allows the FH2 domain to then nucleate and elongate nonbranched actin filaments (By similarity).</text>
</comment>
<comment type="miscellaneous">
    <molecule>Isoform 1</molecule>
    <text>Major form in heart.</text>
</comment>
<comment type="miscellaneous">
    <molecule>Isoform 2</molecule>
    <text evidence="12">Major form in kidney and brain.</text>
</comment>
<comment type="similarity">
    <text evidence="12">Belongs to the formin homology family.</text>
</comment>
<dbReference type="EMBL" id="AB078608">
    <property type="protein sequence ID" value="BAC98302.1"/>
    <property type="molecule type" value="mRNA"/>
</dbReference>
<dbReference type="EMBL" id="AB078609">
    <property type="protein sequence ID" value="BAC98303.1"/>
    <property type="molecule type" value="mRNA"/>
</dbReference>
<dbReference type="EMBL" id="AB100088">
    <property type="protein sequence ID" value="BAC98348.1"/>
    <property type="molecule type" value="mRNA"/>
</dbReference>
<dbReference type="EMBL" id="BC138046">
    <property type="protein sequence ID" value="AAI38047.1"/>
    <property type="molecule type" value="mRNA"/>
</dbReference>
<dbReference type="EMBL" id="AK220413">
    <property type="protein sequence ID" value="BAD90459.1"/>
    <property type="molecule type" value="mRNA"/>
</dbReference>
<dbReference type="CCDS" id="CCDS29104.1">
    <molecule id="Q76LL6-1"/>
</dbReference>
<dbReference type="CCDS" id="CCDS89202.1">
    <molecule id="Q76LL6-4"/>
</dbReference>
<dbReference type="CCDS" id="CCDS89203.1">
    <molecule id="Q76LL6-2"/>
</dbReference>
<dbReference type="RefSeq" id="NP_001276583.1">
    <molecule id="Q76LL6-2"/>
    <property type="nucleotide sequence ID" value="NM_001289654.1"/>
</dbReference>
<dbReference type="RefSeq" id="NP_001276584.1">
    <molecule id="Q76LL6-4"/>
    <property type="nucleotide sequence ID" value="NM_001289655.1"/>
</dbReference>
<dbReference type="RefSeq" id="NP_780485.2">
    <molecule id="Q76LL6-1"/>
    <property type="nucleotide sequence ID" value="NM_175276.4"/>
</dbReference>
<dbReference type="SMR" id="Q76LL6"/>
<dbReference type="BioGRID" id="230379">
    <property type="interactions" value="2"/>
</dbReference>
<dbReference type="FunCoup" id="Q76LL6">
    <property type="interactions" value="323"/>
</dbReference>
<dbReference type="IntAct" id="Q76LL6">
    <property type="interactions" value="1"/>
</dbReference>
<dbReference type="STRING" id="10090.ENSMUSP00000041361"/>
<dbReference type="GlyGen" id="Q76LL6">
    <property type="glycosylation" value="5 sites, 2 N-linked glycans (2 sites), 1 O-linked glycan (3 sites)"/>
</dbReference>
<dbReference type="iPTMnet" id="Q76LL6"/>
<dbReference type="PhosphoSitePlus" id="Q76LL6"/>
<dbReference type="PaxDb" id="10090-ENSMUSP00000041361"/>
<dbReference type="ProteomicsDB" id="267470">
    <molecule id="Q76LL6-1"/>
</dbReference>
<dbReference type="ProteomicsDB" id="267471">
    <molecule id="Q76LL6-2"/>
</dbReference>
<dbReference type="ProteomicsDB" id="267472">
    <molecule id="Q76LL6-3"/>
</dbReference>
<dbReference type="ProteomicsDB" id="267473">
    <molecule id="Q76LL6-4"/>
</dbReference>
<dbReference type="Antibodypedia" id="8734">
    <property type="antibodies" value="51 antibodies from 12 providers"/>
</dbReference>
<dbReference type="Ensembl" id="ENSMUST00000037097.9">
    <molecule id="Q76LL6-1"/>
    <property type="protein sequence ID" value="ENSMUSP00000041361.8"/>
    <property type="gene ID" value="ENSMUSG00000034295.12"/>
</dbReference>
<dbReference type="Ensembl" id="ENSMUST00000234526.2">
    <molecule id="Q76LL6-4"/>
    <property type="protein sequence ID" value="ENSMUSP00000157193.2"/>
    <property type="gene ID" value="ENSMUSG00000034295.12"/>
</dbReference>
<dbReference type="Ensembl" id="ENSMUST00000234834.2">
    <molecule id="Q76LL6-2"/>
    <property type="protein sequence ID" value="ENSMUSP00000157226.2"/>
    <property type="gene ID" value="ENSMUSG00000034295.12"/>
</dbReference>
<dbReference type="GeneID" id="225288"/>
<dbReference type="KEGG" id="mmu:225288"/>
<dbReference type="UCSC" id="uc008ehb.2">
    <molecule id="Q76LL6-1"/>
    <property type="organism name" value="mouse"/>
</dbReference>
<dbReference type="UCSC" id="uc008ehc.2">
    <molecule id="Q76LL6-2"/>
    <property type="organism name" value="mouse"/>
</dbReference>
<dbReference type="UCSC" id="uc012bak.2">
    <molecule id="Q76LL6-4"/>
    <property type="organism name" value="mouse"/>
</dbReference>
<dbReference type="AGR" id="MGI:1925847"/>
<dbReference type="CTD" id="80206"/>
<dbReference type="MGI" id="MGI:1925847">
    <property type="gene designation" value="Fhod3"/>
</dbReference>
<dbReference type="VEuPathDB" id="HostDB:ENSMUSG00000034295"/>
<dbReference type="eggNOG" id="KOG1925">
    <property type="taxonomic scope" value="Eukaryota"/>
</dbReference>
<dbReference type="GeneTree" id="ENSGT00940000154807"/>
<dbReference type="HOGENOM" id="CLU_000814_0_1_1"/>
<dbReference type="InParanoid" id="Q76LL6"/>
<dbReference type="OMA" id="GHYSDGH"/>
<dbReference type="PhylomeDB" id="Q76LL6"/>
<dbReference type="TreeFam" id="TF316268"/>
<dbReference type="BioGRID-ORCS" id="225288">
    <property type="hits" value="1 hit in 79 CRISPR screens"/>
</dbReference>
<dbReference type="ChiTaRS" id="Fhod3">
    <property type="organism name" value="mouse"/>
</dbReference>
<dbReference type="PRO" id="PR:Q76LL6"/>
<dbReference type="Proteomes" id="UP000000589">
    <property type="component" value="Chromosome 18"/>
</dbReference>
<dbReference type="RNAct" id="Q76LL6">
    <property type="molecule type" value="protein"/>
</dbReference>
<dbReference type="Bgee" id="ENSMUSG00000034295">
    <property type="expression patterns" value="Expressed in myocardium of ventricle and 261 other cell types or tissues"/>
</dbReference>
<dbReference type="GO" id="GO:0030017">
    <property type="term" value="C:sarcomere"/>
    <property type="evidence" value="ECO:0000314"/>
    <property type="project" value="MGI"/>
</dbReference>
<dbReference type="GO" id="GO:0005865">
    <property type="term" value="C:striated muscle thin filament"/>
    <property type="evidence" value="ECO:0000266"/>
    <property type="project" value="MGI"/>
</dbReference>
<dbReference type="GO" id="GO:0030018">
    <property type="term" value="C:Z disc"/>
    <property type="evidence" value="ECO:0007669"/>
    <property type="project" value="UniProtKB-SubCell"/>
</dbReference>
<dbReference type="GO" id="GO:0003779">
    <property type="term" value="F:actin binding"/>
    <property type="evidence" value="ECO:0007669"/>
    <property type="project" value="UniProtKB-KW"/>
</dbReference>
<dbReference type="GO" id="GO:0051639">
    <property type="term" value="P:actin filament network formation"/>
    <property type="evidence" value="ECO:0000314"/>
    <property type="project" value="MGI"/>
</dbReference>
<dbReference type="GO" id="GO:0055003">
    <property type="term" value="P:cardiac myofibril assembly"/>
    <property type="evidence" value="ECO:0000315"/>
    <property type="project" value="MGI"/>
</dbReference>
<dbReference type="GO" id="GO:0030837">
    <property type="term" value="P:negative regulation of actin filament polymerization"/>
    <property type="evidence" value="ECO:0000314"/>
    <property type="project" value="MGI"/>
</dbReference>
<dbReference type="GO" id="GO:0045214">
    <property type="term" value="P:sarcomere organization"/>
    <property type="evidence" value="ECO:0000316"/>
    <property type="project" value="MGI"/>
</dbReference>
<dbReference type="FunFam" id="1.25.10.10:FF:000056">
    <property type="entry name" value="FH1/FH2 domain-containing protein 3 isoform X1"/>
    <property type="match status" value="1"/>
</dbReference>
<dbReference type="FunFam" id="1.20.58.2220:FF:000004">
    <property type="entry name" value="Formin homology 2 domain-containing 3"/>
    <property type="match status" value="1"/>
</dbReference>
<dbReference type="Gene3D" id="1.20.58.2220">
    <property type="entry name" value="Formin, FH2 domain"/>
    <property type="match status" value="1"/>
</dbReference>
<dbReference type="Gene3D" id="1.25.10.10">
    <property type="entry name" value="Leucine-rich Repeat Variant"/>
    <property type="match status" value="1"/>
</dbReference>
<dbReference type="InterPro" id="IPR011989">
    <property type="entry name" value="ARM-like"/>
</dbReference>
<dbReference type="InterPro" id="IPR016024">
    <property type="entry name" value="ARM-type_fold"/>
</dbReference>
<dbReference type="InterPro" id="IPR014767">
    <property type="entry name" value="DAD_dom"/>
</dbReference>
<dbReference type="InterPro" id="IPR015425">
    <property type="entry name" value="FH2_Formin"/>
</dbReference>
<dbReference type="InterPro" id="IPR042201">
    <property type="entry name" value="FH2_Formin_sf"/>
</dbReference>
<dbReference type="InterPro" id="IPR056771">
    <property type="entry name" value="FH3_FHOD1-3-like"/>
</dbReference>
<dbReference type="InterPro" id="IPR041387">
    <property type="entry name" value="FHOD1_GBD_N"/>
</dbReference>
<dbReference type="InterPro" id="IPR014768">
    <property type="entry name" value="GBD/FH3_dom"/>
</dbReference>
<dbReference type="PANTHER" id="PTHR45920:SF3">
    <property type="entry name" value="FH1_FH2 DOMAIN-CONTAINING PROTEIN 3"/>
    <property type="match status" value="1"/>
</dbReference>
<dbReference type="PANTHER" id="PTHR45920">
    <property type="entry name" value="FORMIN HOMOLOGY 2 DOMAIN CONTAINING, ISOFORM I"/>
    <property type="match status" value="1"/>
</dbReference>
<dbReference type="Pfam" id="PF02181">
    <property type="entry name" value="FH2"/>
    <property type="match status" value="1"/>
</dbReference>
<dbReference type="Pfam" id="PF24959">
    <property type="entry name" value="FH3_FHOD1-3"/>
    <property type="match status" value="1"/>
</dbReference>
<dbReference type="Pfam" id="PF18382">
    <property type="entry name" value="Formin_GBD_N"/>
    <property type="match status" value="1"/>
</dbReference>
<dbReference type="SMART" id="SM00498">
    <property type="entry name" value="FH2"/>
    <property type="match status" value="1"/>
</dbReference>
<dbReference type="SUPFAM" id="SSF48371">
    <property type="entry name" value="ARM repeat"/>
    <property type="match status" value="1"/>
</dbReference>
<dbReference type="SUPFAM" id="SSF101447">
    <property type="entry name" value="Formin homology 2 domain (FH2 domain)"/>
    <property type="match status" value="1"/>
</dbReference>
<dbReference type="PROSITE" id="PS51231">
    <property type="entry name" value="DAD"/>
    <property type="match status" value="1"/>
</dbReference>
<dbReference type="PROSITE" id="PS51444">
    <property type="entry name" value="FH2"/>
    <property type="match status" value="1"/>
</dbReference>
<dbReference type="PROSITE" id="PS51232">
    <property type="entry name" value="GBD_FH3"/>
    <property type="match status" value="1"/>
</dbReference>
<evidence type="ECO:0000250" key="1"/>
<evidence type="ECO:0000255" key="2"/>
<evidence type="ECO:0000255" key="3">
    <source>
        <dbReference type="PROSITE-ProRule" id="PRU00577"/>
    </source>
</evidence>
<evidence type="ECO:0000255" key="4">
    <source>
        <dbReference type="PROSITE-ProRule" id="PRU00579"/>
    </source>
</evidence>
<evidence type="ECO:0000255" key="5">
    <source>
        <dbReference type="PROSITE-ProRule" id="PRU00774"/>
    </source>
</evidence>
<evidence type="ECO:0000256" key="6">
    <source>
        <dbReference type="SAM" id="MobiDB-lite"/>
    </source>
</evidence>
<evidence type="ECO:0000269" key="7">
    <source>
    </source>
</evidence>
<evidence type="ECO:0000269" key="8">
    <source>
    </source>
</evidence>
<evidence type="ECO:0000303" key="9">
    <source>
    </source>
</evidence>
<evidence type="ECO:0000303" key="10">
    <source>
    </source>
</evidence>
<evidence type="ECO:0000303" key="11">
    <source ref="3"/>
</evidence>
<evidence type="ECO:0000305" key="12"/>
<evidence type="ECO:0007744" key="13">
    <source>
    </source>
</evidence>
<name>FHOD3_MOUSE</name>
<proteinExistence type="evidence at protein level"/>
<reference key="1">
    <citation type="journal article" date="2005" name="Genes Cells">
        <title>Fhos2, a novel formin-related actin-organizing protein, probably associates with the nestin intermediate filament.</title>
        <authorList>
            <person name="Kanaya H."/>
            <person name="Takeya R."/>
            <person name="Takeuchi K."/>
            <person name="Watanabe N."/>
            <person name="Jing N."/>
            <person name="Sumimoto H."/>
        </authorList>
    </citation>
    <scope>NUCLEOTIDE SEQUENCE [MRNA] (ISOFORMS 1; 2 AND 4)</scope>
    <scope>TISSUE SPECIFICITY</scope>
    <scope>FUNCTION</scope>
</reference>
<reference key="2">
    <citation type="journal article" date="2004" name="Genome Res.">
        <title>The status, quality, and expansion of the NIH full-length cDNA project: the Mammalian Gene Collection (MGC).</title>
        <authorList>
            <consortium name="The MGC Project Team"/>
        </authorList>
    </citation>
    <scope>NUCLEOTIDE SEQUENCE [LARGE SCALE MRNA] (ISOFORM 2)</scope>
    <source>
        <tissue>Brain</tissue>
    </source>
</reference>
<reference key="3">
    <citation type="submission" date="2005-02" db="EMBL/GenBank/DDBJ databases">
        <title>Prediction of the coding sequences of mouse homologues of KIAA gene. The complete nucleotide sequences of mouse KIAA-homologous cDNAs identified by screening of terminal sequences of cDNA clones randomly sampled from size-fractionated libraries.</title>
        <authorList>
            <person name="Okazaki N."/>
            <person name="Kikuno R.F."/>
            <person name="Ohara R."/>
            <person name="Inamoto S."/>
            <person name="Nagase T."/>
            <person name="Ohara O."/>
            <person name="Koga H."/>
        </authorList>
    </citation>
    <scope>NUCLEOTIDE SEQUENCE [LARGE SCALE MRNA] OF 120-1578 (ISOFORM 3)</scope>
    <source>
        <tissue>Brain</tissue>
    </source>
</reference>
<reference key="4">
    <citation type="journal article" date="2010" name="Cell">
        <title>A tissue-specific atlas of mouse protein phosphorylation and expression.</title>
        <authorList>
            <person name="Huttlin E.L."/>
            <person name="Jedrychowski M.P."/>
            <person name="Elias J.E."/>
            <person name="Goswami T."/>
            <person name="Rad R."/>
            <person name="Beausoleil S.A."/>
            <person name="Villen J."/>
            <person name="Haas W."/>
            <person name="Sowa M.E."/>
            <person name="Gygi S.P."/>
        </authorList>
    </citation>
    <scope>PHOSPHORYLATION [LARGE SCALE ANALYSIS] AT SER-345; SER-376; THR-413; SER-921 AND THR-933</scope>
    <scope>IDENTIFICATION BY MASS SPECTROMETRY [LARGE SCALE ANALYSIS]</scope>
    <source>
        <tissue>Brain</tissue>
        <tissue>Heart</tissue>
        <tissue>Kidney</tissue>
    </source>
</reference>
<reference key="5">
    <citation type="journal article" date="2010" name="J. Cell Biol.">
        <title>Formin follows function: a muscle-specific isoform of FHOD3 is regulated by CK2 phosphorylation and promotes myofibril maintenance.</title>
        <authorList>
            <person name="Iskratsch T."/>
            <person name="Lange S."/>
            <person name="Dwyer J."/>
            <person name="Kho A.L."/>
            <person name="dos Remedios C."/>
            <person name="Ehler E."/>
        </authorList>
    </citation>
    <scope>SUBCELLULAR LOCATION</scope>
    <scope>TISSUE SPECIFICITY</scope>
</reference>
<organism>
    <name type="scientific">Mus musculus</name>
    <name type="common">Mouse</name>
    <dbReference type="NCBI Taxonomy" id="10090"/>
    <lineage>
        <taxon>Eukaryota</taxon>
        <taxon>Metazoa</taxon>
        <taxon>Chordata</taxon>
        <taxon>Craniata</taxon>
        <taxon>Vertebrata</taxon>
        <taxon>Euteleostomi</taxon>
        <taxon>Mammalia</taxon>
        <taxon>Eutheria</taxon>
        <taxon>Euarchontoglires</taxon>
        <taxon>Glires</taxon>
        <taxon>Rodentia</taxon>
        <taxon>Myomorpha</taxon>
        <taxon>Muroidea</taxon>
        <taxon>Muridae</taxon>
        <taxon>Murinae</taxon>
        <taxon>Mus</taxon>
        <taxon>Mus</taxon>
    </lineage>
</organism>
<gene>
    <name type="primary">Fhod3</name>
    <name type="synonym">Fhos2</name>
    <name type="synonym">Kiaa1695</name>
</gene>